<feature type="chain" id="PRO_0000098675" description="5-methyltetrahydropteroyltriglutamate--homocysteine methyltransferase">
    <location>
        <begin position="1"/>
        <end position="761"/>
    </location>
</feature>
<feature type="active site" description="Proton donor" evidence="1">
    <location>
        <position position="699"/>
    </location>
</feature>
<feature type="binding site" evidence="1">
    <location>
        <begin position="16"/>
        <end position="19"/>
    </location>
    <ligand>
        <name>5-methyltetrahydropteroyltri-L-glutamate</name>
        <dbReference type="ChEBI" id="CHEBI:58207"/>
    </ligand>
</feature>
<feature type="binding site" evidence="1">
    <location>
        <position position="118"/>
    </location>
    <ligand>
        <name>5-methyltetrahydropteroyltri-L-glutamate</name>
        <dbReference type="ChEBI" id="CHEBI:58207"/>
    </ligand>
</feature>
<feature type="binding site" evidence="1">
    <location>
        <begin position="436"/>
        <end position="438"/>
    </location>
    <ligand>
        <name>L-homocysteine</name>
        <dbReference type="ChEBI" id="CHEBI:58199"/>
    </ligand>
</feature>
<feature type="binding site" evidence="1">
    <location>
        <begin position="436"/>
        <end position="438"/>
    </location>
    <ligand>
        <name>L-methionine</name>
        <dbReference type="ChEBI" id="CHEBI:57844"/>
    </ligand>
</feature>
<feature type="binding site" evidence="1">
    <location>
        <position position="489"/>
    </location>
    <ligand>
        <name>L-homocysteine</name>
        <dbReference type="ChEBI" id="CHEBI:58199"/>
    </ligand>
</feature>
<feature type="binding site" evidence="1">
    <location>
        <position position="489"/>
    </location>
    <ligand>
        <name>L-methionine</name>
        <dbReference type="ChEBI" id="CHEBI:57844"/>
    </ligand>
</feature>
<feature type="binding site" evidence="1">
    <location>
        <begin position="520"/>
        <end position="521"/>
    </location>
    <ligand>
        <name>5-methyltetrahydropteroyltri-L-glutamate</name>
        <dbReference type="ChEBI" id="CHEBI:58207"/>
    </ligand>
</feature>
<feature type="binding site" evidence="1">
    <location>
        <position position="566"/>
    </location>
    <ligand>
        <name>5-methyltetrahydropteroyltri-L-glutamate</name>
        <dbReference type="ChEBI" id="CHEBI:58207"/>
    </ligand>
</feature>
<feature type="binding site" evidence="1">
    <location>
        <position position="604"/>
    </location>
    <ligand>
        <name>L-homocysteine</name>
        <dbReference type="ChEBI" id="CHEBI:58199"/>
    </ligand>
</feature>
<feature type="binding site" evidence="1">
    <location>
        <position position="604"/>
    </location>
    <ligand>
        <name>L-methionine</name>
        <dbReference type="ChEBI" id="CHEBI:57844"/>
    </ligand>
</feature>
<feature type="binding site" evidence="1">
    <location>
        <position position="610"/>
    </location>
    <ligand>
        <name>5-methyltetrahydropteroyltri-L-glutamate</name>
        <dbReference type="ChEBI" id="CHEBI:58207"/>
    </ligand>
</feature>
<feature type="binding site" evidence="1">
    <location>
        <position position="646"/>
    </location>
    <ligand>
        <name>Zn(2+)</name>
        <dbReference type="ChEBI" id="CHEBI:29105"/>
        <note>catalytic</note>
    </ligand>
</feature>
<feature type="binding site" evidence="1">
    <location>
        <position position="648"/>
    </location>
    <ligand>
        <name>Zn(2+)</name>
        <dbReference type="ChEBI" id="CHEBI:29105"/>
        <note>catalytic</note>
    </ligand>
</feature>
<feature type="binding site" evidence="1">
    <location>
        <position position="670"/>
    </location>
    <ligand>
        <name>Zn(2+)</name>
        <dbReference type="ChEBI" id="CHEBI:29105"/>
        <note>catalytic</note>
    </ligand>
</feature>
<feature type="binding site" evidence="1">
    <location>
        <position position="731"/>
    </location>
    <ligand>
        <name>Zn(2+)</name>
        <dbReference type="ChEBI" id="CHEBI:29105"/>
        <note>catalytic</note>
    </ligand>
</feature>
<reference key="1">
    <citation type="journal article" date="2000" name="Nature">
        <title>DNA sequence of both chromosomes of the cholera pathogen Vibrio cholerae.</title>
        <authorList>
            <person name="Heidelberg J.F."/>
            <person name="Eisen J.A."/>
            <person name="Nelson W.C."/>
            <person name="Clayton R.A."/>
            <person name="Gwinn M.L."/>
            <person name="Dodson R.J."/>
            <person name="Haft D.H."/>
            <person name="Hickey E.K."/>
            <person name="Peterson J.D."/>
            <person name="Umayam L.A."/>
            <person name="Gill S.R."/>
            <person name="Nelson K.E."/>
            <person name="Read T.D."/>
            <person name="Tettelin H."/>
            <person name="Richardson D.L."/>
            <person name="Ermolaeva M.D."/>
            <person name="Vamathevan J.J."/>
            <person name="Bass S."/>
            <person name="Qin H."/>
            <person name="Dragoi I."/>
            <person name="Sellers P."/>
            <person name="McDonald L.A."/>
            <person name="Utterback T.R."/>
            <person name="Fleischmann R.D."/>
            <person name="Nierman W.C."/>
            <person name="White O."/>
            <person name="Salzberg S.L."/>
            <person name="Smith H.O."/>
            <person name="Colwell R.R."/>
            <person name="Mekalanos J.J."/>
            <person name="Venter J.C."/>
            <person name="Fraser C.M."/>
        </authorList>
    </citation>
    <scope>NUCLEOTIDE SEQUENCE [LARGE SCALE GENOMIC DNA]</scope>
    <source>
        <strain>ATCC 39315 / El Tor Inaba N16961</strain>
    </source>
</reference>
<name>METE_VIBCH</name>
<dbReference type="EC" id="2.1.1.14" evidence="1"/>
<dbReference type="EMBL" id="AE003852">
    <property type="protein sequence ID" value="AAF94854.1"/>
    <property type="molecule type" value="Genomic_DNA"/>
</dbReference>
<dbReference type="PIR" id="E82167">
    <property type="entry name" value="E82167"/>
</dbReference>
<dbReference type="RefSeq" id="NP_231340.1">
    <property type="nucleotide sequence ID" value="NC_002505.1"/>
</dbReference>
<dbReference type="RefSeq" id="WP_000213942.1">
    <property type="nucleotide sequence ID" value="NZ_LT906614.1"/>
</dbReference>
<dbReference type="SMR" id="Q9KRD8"/>
<dbReference type="STRING" id="243277.VC_1704"/>
<dbReference type="DNASU" id="2613709"/>
<dbReference type="EnsemblBacteria" id="AAF94854">
    <property type="protein sequence ID" value="AAF94854"/>
    <property type="gene ID" value="VC_1704"/>
</dbReference>
<dbReference type="KEGG" id="vch:VC_1704"/>
<dbReference type="PATRIC" id="fig|243277.26.peg.1631"/>
<dbReference type="eggNOG" id="COG0620">
    <property type="taxonomic scope" value="Bacteria"/>
</dbReference>
<dbReference type="HOGENOM" id="CLU_013175_0_0_6"/>
<dbReference type="UniPathway" id="UPA00051">
    <property type="reaction ID" value="UER00082"/>
</dbReference>
<dbReference type="Proteomes" id="UP000000584">
    <property type="component" value="Chromosome 1"/>
</dbReference>
<dbReference type="GO" id="GO:0003871">
    <property type="term" value="F:5-methyltetrahydropteroyltriglutamate-homocysteine S-methyltransferase activity"/>
    <property type="evidence" value="ECO:0007669"/>
    <property type="project" value="UniProtKB-UniRule"/>
</dbReference>
<dbReference type="GO" id="GO:0008270">
    <property type="term" value="F:zinc ion binding"/>
    <property type="evidence" value="ECO:0007669"/>
    <property type="project" value="InterPro"/>
</dbReference>
<dbReference type="GO" id="GO:0009086">
    <property type="term" value="P:methionine biosynthetic process"/>
    <property type="evidence" value="ECO:0007669"/>
    <property type="project" value="UniProtKB-UniRule"/>
</dbReference>
<dbReference type="GO" id="GO:0032259">
    <property type="term" value="P:methylation"/>
    <property type="evidence" value="ECO:0007669"/>
    <property type="project" value="UniProtKB-KW"/>
</dbReference>
<dbReference type="CDD" id="cd03311">
    <property type="entry name" value="CIMS_C_terminal_like"/>
    <property type="match status" value="1"/>
</dbReference>
<dbReference type="CDD" id="cd03312">
    <property type="entry name" value="CIMS_N_terminal_like"/>
    <property type="match status" value="1"/>
</dbReference>
<dbReference type="FunFam" id="3.20.20.210:FF:000002">
    <property type="entry name" value="5-methyltetrahydropteroyltriglutamate--homocysteine methyltransferase"/>
    <property type="match status" value="1"/>
</dbReference>
<dbReference type="FunFam" id="3.20.20.210:FF:000003">
    <property type="entry name" value="5-methyltetrahydropteroyltriglutamate--homocysteine methyltransferase"/>
    <property type="match status" value="1"/>
</dbReference>
<dbReference type="Gene3D" id="3.20.20.210">
    <property type="match status" value="2"/>
</dbReference>
<dbReference type="HAMAP" id="MF_00172">
    <property type="entry name" value="Meth_synth"/>
    <property type="match status" value="1"/>
</dbReference>
<dbReference type="InterPro" id="IPR013215">
    <property type="entry name" value="Cbl-indep_Met_Synth_N"/>
</dbReference>
<dbReference type="InterPro" id="IPR006276">
    <property type="entry name" value="Cobalamin-indep_Met_synthase"/>
</dbReference>
<dbReference type="InterPro" id="IPR002629">
    <property type="entry name" value="Met_Synth_C/arc"/>
</dbReference>
<dbReference type="InterPro" id="IPR038071">
    <property type="entry name" value="UROD/MetE-like_sf"/>
</dbReference>
<dbReference type="NCBIfam" id="TIGR01371">
    <property type="entry name" value="met_syn_B12ind"/>
    <property type="match status" value="1"/>
</dbReference>
<dbReference type="NCBIfam" id="NF003556">
    <property type="entry name" value="PRK05222.1"/>
    <property type="match status" value="1"/>
</dbReference>
<dbReference type="PANTHER" id="PTHR30519">
    <property type="entry name" value="5-METHYLTETRAHYDROPTEROYLTRIGLUTAMATE--HOMOCYSTEINE METHYLTRANSFERASE"/>
    <property type="match status" value="1"/>
</dbReference>
<dbReference type="Pfam" id="PF08267">
    <property type="entry name" value="Meth_synt_1"/>
    <property type="match status" value="1"/>
</dbReference>
<dbReference type="Pfam" id="PF01717">
    <property type="entry name" value="Meth_synt_2"/>
    <property type="match status" value="1"/>
</dbReference>
<dbReference type="PIRSF" id="PIRSF000382">
    <property type="entry name" value="MeTrfase_B12_ind"/>
    <property type="match status" value="1"/>
</dbReference>
<dbReference type="SUPFAM" id="SSF51726">
    <property type="entry name" value="UROD/MetE-like"/>
    <property type="match status" value="2"/>
</dbReference>
<protein>
    <recommendedName>
        <fullName evidence="1">5-methyltetrahydropteroyltriglutamate--homocysteine methyltransferase</fullName>
        <ecNumber evidence="1">2.1.1.14</ecNumber>
    </recommendedName>
    <alternativeName>
        <fullName evidence="1">Cobalamin-independent methionine synthase</fullName>
    </alternativeName>
    <alternativeName>
        <fullName evidence="1">Methionine synthase, vitamin-B12 independent isozyme</fullName>
    </alternativeName>
</protein>
<evidence type="ECO:0000255" key="1">
    <source>
        <dbReference type="HAMAP-Rule" id="MF_00172"/>
    </source>
</evidence>
<evidence type="ECO:0000305" key="2"/>
<sequence>MTTTHILGYPRIGEKRELKFALEKYWRGEIDQAALKQVGSQIRQKNWALQKEAGLDFVTAGDFAWYDHVLTTTLLLGHVPKRHSHGFPDLDTLFRVGRGQSQNACGCGTGSAASDMTKWFNTNYHYIVPEFSSNDTFNVSWPQLFEEVNEALQAGHDVKPVLLGPISYLYLGKEVEEGFDRLTLLPRLLTAYQAILSKLAKQGVQWVQIDEPILALELEPRWQEAFKLAYQVIRGDVKLLLTTYFDSVLDTLDKIVELPVDGLHVDISAAPAQLETIVNRLPSDWVLSAGVINGRNVWRADLSAILARLQPVKTLLGERLWVASSCSLLHSPVDLDLEGDLSAETRSWFAFAKQKVTEVALLGRALEGDAAAILACDTYSQPIVARKSSHIVNKASVQTRINNITAALAERSAPYIERAHHQAEVLGLPFLPTTTIGSFPQTGEIRTERSAYRQGKLSEQEYVQALKGHIADAVKRQEALGLDVLVHGEAERNDMVEYFAENLAGFQTTQFGWVQSYGSRCVKPAIVVADIEREKPITVEWSTYAQSLTSKQMKGMLTGPVTILCWTFPREDISRQEIAQQLALALRDEVADLQDAGINIIQIDEPAIREGLPLKKRDHQTYLDWAVQAFKISAGSARPETQIHTHMCYSEFNEIIESVAALDADVITIETSRSNMELLKAFEEFNYPNEIGPGVYDIHSPNIPAQAWIEDLLRKAAEKIPAQRLWVNPDCGLKTRNWPEVEAALTNMVNAAKALRAEWQA</sequence>
<keyword id="KW-0028">Amino-acid biosynthesis</keyword>
<keyword id="KW-0479">Metal-binding</keyword>
<keyword id="KW-0486">Methionine biosynthesis</keyword>
<keyword id="KW-0489">Methyltransferase</keyword>
<keyword id="KW-1185">Reference proteome</keyword>
<keyword id="KW-0677">Repeat</keyword>
<keyword id="KW-0808">Transferase</keyword>
<keyword id="KW-0862">Zinc</keyword>
<gene>
    <name evidence="1" type="primary">metE</name>
    <name type="ordered locus">VC_1704</name>
</gene>
<accession>Q9KRD8</accession>
<organism>
    <name type="scientific">Vibrio cholerae serotype O1 (strain ATCC 39315 / El Tor Inaba N16961)</name>
    <dbReference type="NCBI Taxonomy" id="243277"/>
    <lineage>
        <taxon>Bacteria</taxon>
        <taxon>Pseudomonadati</taxon>
        <taxon>Pseudomonadota</taxon>
        <taxon>Gammaproteobacteria</taxon>
        <taxon>Vibrionales</taxon>
        <taxon>Vibrionaceae</taxon>
        <taxon>Vibrio</taxon>
    </lineage>
</organism>
<proteinExistence type="inferred from homology"/>
<comment type="function">
    <text evidence="1">Catalyzes the transfer of a methyl group from 5-methyltetrahydrofolate to homocysteine resulting in methionine formation.</text>
</comment>
<comment type="catalytic activity">
    <reaction evidence="1">
        <text>5-methyltetrahydropteroyltri-L-glutamate + L-homocysteine = tetrahydropteroyltri-L-glutamate + L-methionine</text>
        <dbReference type="Rhea" id="RHEA:21196"/>
        <dbReference type="ChEBI" id="CHEBI:57844"/>
        <dbReference type="ChEBI" id="CHEBI:58140"/>
        <dbReference type="ChEBI" id="CHEBI:58199"/>
        <dbReference type="ChEBI" id="CHEBI:58207"/>
        <dbReference type="EC" id="2.1.1.14"/>
    </reaction>
</comment>
<comment type="cofactor">
    <cofactor evidence="1">
        <name>Zn(2+)</name>
        <dbReference type="ChEBI" id="CHEBI:29105"/>
    </cofactor>
    <text evidence="1">Binds 1 zinc ion per subunit.</text>
</comment>
<comment type="pathway">
    <text evidence="1">Amino-acid biosynthesis; L-methionine biosynthesis via de novo pathway; L-methionine from L-homocysteine (MetE route): step 1/1.</text>
</comment>
<comment type="similarity">
    <text evidence="1 2">Belongs to the vitamin-B12 independent methionine synthase family.</text>
</comment>